<accession>B7MYB2</accession>
<evidence type="ECO:0000255" key="1">
    <source>
        <dbReference type="HAMAP-Rule" id="MF_01566"/>
    </source>
</evidence>
<evidence type="ECO:0000256" key="2">
    <source>
        <dbReference type="SAM" id="MobiDB-lite"/>
    </source>
</evidence>
<sequence length="66" mass="8071">MDWLAKYWWILVIVFLVGVLLNVIKDLKRVDHKKFLANKPELPPHRDFNDKWDDDDDWPKKDQPKK</sequence>
<name>YPFN_ECO81</name>
<gene>
    <name evidence="1" type="primary">ypfN</name>
    <name type="ordered locus">ECED1_2906</name>
</gene>
<dbReference type="EMBL" id="CU928162">
    <property type="protein sequence ID" value="CAR09078.2"/>
    <property type="molecule type" value="Genomic_DNA"/>
</dbReference>
<dbReference type="RefSeq" id="WP_000383836.1">
    <property type="nucleotide sequence ID" value="NC_011745.1"/>
</dbReference>
<dbReference type="SMR" id="B7MYB2"/>
<dbReference type="KEGG" id="ecq:ECED1_2906"/>
<dbReference type="HOGENOM" id="CLU_198936_0_0_6"/>
<dbReference type="Proteomes" id="UP000000748">
    <property type="component" value="Chromosome"/>
</dbReference>
<dbReference type="GO" id="GO:0005886">
    <property type="term" value="C:plasma membrane"/>
    <property type="evidence" value="ECO:0007669"/>
    <property type="project" value="UniProtKB-SubCell"/>
</dbReference>
<dbReference type="HAMAP" id="MF_01566">
    <property type="entry name" value="UPF0370"/>
    <property type="match status" value="1"/>
</dbReference>
<dbReference type="InterPro" id="IPR020910">
    <property type="entry name" value="UPF0370"/>
</dbReference>
<dbReference type="NCBIfam" id="NF010185">
    <property type="entry name" value="PRK13664.1"/>
    <property type="match status" value="1"/>
</dbReference>
<dbReference type="Pfam" id="PF13980">
    <property type="entry name" value="UPF0370"/>
    <property type="match status" value="1"/>
</dbReference>
<feature type="chain" id="PRO_1000185457" description="UPF0370 protein YpfN">
    <location>
        <begin position="1"/>
        <end position="66"/>
    </location>
</feature>
<feature type="transmembrane region" description="Helical" evidence="1">
    <location>
        <begin position="4"/>
        <end position="24"/>
    </location>
</feature>
<feature type="region of interest" description="Disordered" evidence="2">
    <location>
        <begin position="39"/>
        <end position="66"/>
    </location>
</feature>
<feature type="compositionally biased region" description="Basic and acidic residues" evidence="2">
    <location>
        <begin position="42"/>
        <end position="51"/>
    </location>
</feature>
<keyword id="KW-1003">Cell membrane</keyword>
<keyword id="KW-0472">Membrane</keyword>
<keyword id="KW-0812">Transmembrane</keyword>
<keyword id="KW-1133">Transmembrane helix</keyword>
<reference key="1">
    <citation type="journal article" date="2009" name="PLoS Genet.">
        <title>Organised genome dynamics in the Escherichia coli species results in highly diverse adaptive paths.</title>
        <authorList>
            <person name="Touchon M."/>
            <person name="Hoede C."/>
            <person name="Tenaillon O."/>
            <person name="Barbe V."/>
            <person name="Baeriswyl S."/>
            <person name="Bidet P."/>
            <person name="Bingen E."/>
            <person name="Bonacorsi S."/>
            <person name="Bouchier C."/>
            <person name="Bouvet O."/>
            <person name="Calteau A."/>
            <person name="Chiapello H."/>
            <person name="Clermont O."/>
            <person name="Cruveiller S."/>
            <person name="Danchin A."/>
            <person name="Diard M."/>
            <person name="Dossat C."/>
            <person name="Karoui M.E."/>
            <person name="Frapy E."/>
            <person name="Garry L."/>
            <person name="Ghigo J.M."/>
            <person name="Gilles A.M."/>
            <person name="Johnson J."/>
            <person name="Le Bouguenec C."/>
            <person name="Lescat M."/>
            <person name="Mangenot S."/>
            <person name="Martinez-Jehanne V."/>
            <person name="Matic I."/>
            <person name="Nassif X."/>
            <person name="Oztas S."/>
            <person name="Petit M.A."/>
            <person name="Pichon C."/>
            <person name="Rouy Z."/>
            <person name="Ruf C.S."/>
            <person name="Schneider D."/>
            <person name="Tourret J."/>
            <person name="Vacherie B."/>
            <person name="Vallenet D."/>
            <person name="Medigue C."/>
            <person name="Rocha E.P.C."/>
            <person name="Denamur E."/>
        </authorList>
    </citation>
    <scope>NUCLEOTIDE SEQUENCE [LARGE SCALE GENOMIC DNA]</scope>
    <source>
        <strain>ED1a</strain>
    </source>
</reference>
<proteinExistence type="inferred from homology"/>
<protein>
    <recommendedName>
        <fullName evidence="1">UPF0370 protein YpfN</fullName>
    </recommendedName>
</protein>
<comment type="subcellular location">
    <subcellularLocation>
        <location evidence="1">Cell membrane</location>
        <topology evidence="1">Single-pass membrane protein</topology>
    </subcellularLocation>
</comment>
<comment type="similarity">
    <text evidence="1">Belongs to the UPF0370 family.</text>
</comment>
<organism>
    <name type="scientific">Escherichia coli O81 (strain ED1a)</name>
    <dbReference type="NCBI Taxonomy" id="585397"/>
    <lineage>
        <taxon>Bacteria</taxon>
        <taxon>Pseudomonadati</taxon>
        <taxon>Pseudomonadota</taxon>
        <taxon>Gammaproteobacteria</taxon>
        <taxon>Enterobacterales</taxon>
        <taxon>Enterobacteriaceae</taxon>
        <taxon>Escherichia</taxon>
    </lineage>
</organism>